<sequence length="424" mass="48974">MGQWKVMILICLYGAVKEFRPTEPYMYEYQHTVLNISEHTLNSEVYPIWTYSYLVALIPSFLLTDVLLYKPILIIEALSYFACWMIFVFGRSVWCMQLLELFYGWATATEIAYFAYIYVKVPKEDYKSATAYTRAALLVGRFLAYTLAQLLIGLNWADYMTLNIINLVSMTFAVFLAAILPHVPWRNAYQKKLEDKKSVTDLESLVSEAKYSDYLKLFFVELHQNLYTIYKNPLVLKWSIWSALSSCIFYQIINYTQTLWGTLPEKENKYNGIPEALVPLLGIPADLITRQMNVNWNRWGDALISVGSLLQAGLLFWMSQSHEIIILYICYIIYRVIYQLTTTIAQSTLALTLDSRLFGLLFGINTFVALALQSILTAIVIDAEKLAIRAQFVVYSGYHIVVATLFGIIFGIWAIRTIWRKRSH</sequence>
<accession>Q22931</accession>
<accession>A7LPE0</accession>
<protein>
    <recommendedName>
        <fullName>Folate-like transporter 3</fullName>
    </recommendedName>
</protein>
<keyword id="KW-0290">Folate-binding</keyword>
<keyword id="KW-0325">Glycoprotein</keyword>
<keyword id="KW-0472">Membrane</keyword>
<keyword id="KW-1185">Reference proteome</keyword>
<keyword id="KW-0812">Transmembrane</keyword>
<keyword id="KW-1133">Transmembrane helix</keyword>
<keyword id="KW-0813">Transport</keyword>
<name>FOLT3_CAEEL</name>
<dbReference type="EMBL" id="FO080913">
    <property type="protein sequence ID" value="CCD67752.1"/>
    <property type="molecule type" value="Genomic_DNA"/>
</dbReference>
<dbReference type="PIR" id="T29677">
    <property type="entry name" value="T29677"/>
</dbReference>
<dbReference type="RefSeq" id="NP_001041097.2">
    <property type="nucleotide sequence ID" value="NM_001047632.4"/>
</dbReference>
<dbReference type="SMR" id="Q22931"/>
<dbReference type="FunCoup" id="Q22931">
    <property type="interactions" value="68"/>
</dbReference>
<dbReference type="STRING" id="6239.C50E3.16.1"/>
<dbReference type="GlyCosmos" id="Q22931">
    <property type="glycosylation" value="2 sites, No reported glycans"/>
</dbReference>
<dbReference type="PaxDb" id="6239-C50E3.16"/>
<dbReference type="EnsemblMetazoa" id="C50E3.16.1">
    <property type="protein sequence ID" value="C50E3.16.1"/>
    <property type="gene ID" value="WBGene00044738"/>
</dbReference>
<dbReference type="GeneID" id="4363081"/>
<dbReference type="KEGG" id="cel:CELE_C50E3.16"/>
<dbReference type="UCSC" id="C50E3.16">
    <property type="organism name" value="c. elegans"/>
</dbReference>
<dbReference type="AGR" id="WB:WBGene00044738"/>
<dbReference type="CTD" id="4363081"/>
<dbReference type="WormBase" id="C50E3.16">
    <property type="protein sequence ID" value="CE45273"/>
    <property type="gene ID" value="WBGene00044738"/>
    <property type="gene designation" value="folt-3"/>
</dbReference>
<dbReference type="eggNOG" id="KOG3810">
    <property type="taxonomic scope" value="Eukaryota"/>
</dbReference>
<dbReference type="GeneTree" id="ENSGT00950000183022"/>
<dbReference type="HOGENOM" id="CLU_036909_0_1_1"/>
<dbReference type="InParanoid" id="Q22931"/>
<dbReference type="OMA" id="VWKSFEN"/>
<dbReference type="OrthoDB" id="18814at2759"/>
<dbReference type="PhylomeDB" id="Q22931"/>
<dbReference type="Reactome" id="R-CEL-196757">
    <property type="pathway name" value="Metabolism of folate and pterines"/>
</dbReference>
<dbReference type="Reactome" id="R-CEL-196819">
    <property type="pathway name" value="Vitamin B1 (thiamin) metabolism"/>
</dbReference>
<dbReference type="PRO" id="PR:Q22931"/>
<dbReference type="Proteomes" id="UP000001940">
    <property type="component" value="Chromosome V"/>
</dbReference>
<dbReference type="Bgee" id="WBGene00044738">
    <property type="expression patterns" value="Expressed in adult organism and 1 other cell type or tissue"/>
</dbReference>
<dbReference type="GO" id="GO:0005886">
    <property type="term" value="C:plasma membrane"/>
    <property type="evidence" value="ECO:0000318"/>
    <property type="project" value="GO_Central"/>
</dbReference>
<dbReference type="GO" id="GO:0005542">
    <property type="term" value="F:folic acid binding"/>
    <property type="evidence" value="ECO:0007669"/>
    <property type="project" value="UniProtKB-KW"/>
</dbReference>
<dbReference type="GO" id="GO:0090482">
    <property type="term" value="F:vitamin transmembrane transporter activity"/>
    <property type="evidence" value="ECO:0007669"/>
    <property type="project" value="InterPro"/>
</dbReference>
<dbReference type="GO" id="GO:0055085">
    <property type="term" value="P:transmembrane transport"/>
    <property type="evidence" value="ECO:0000318"/>
    <property type="project" value="GO_Central"/>
</dbReference>
<dbReference type="FunFam" id="1.20.1250.20:FF:000298">
    <property type="entry name" value="Thiamine transporter"/>
    <property type="match status" value="1"/>
</dbReference>
<dbReference type="Gene3D" id="1.20.1250.20">
    <property type="entry name" value="MFS general substrate transporter like domains"/>
    <property type="match status" value="1"/>
</dbReference>
<dbReference type="InterPro" id="IPR002666">
    <property type="entry name" value="Folate_carrier"/>
</dbReference>
<dbReference type="InterPro" id="IPR036259">
    <property type="entry name" value="MFS_trans_sf"/>
</dbReference>
<dbReference type="NCBIfam" id="TIGR00806">
    <property type="entry name" value="rfc"/>
    <property type="match status" value="1"/>
</dbReference>
<dbReference type="PANTHER" id="PTHR10686">
    <property type="entry name" value="FOLATE TRANSPORTER"/>
    <property type="match status" value="1"/>
</dbReference>
<dbReference type="PANTHER" id="PTHR10686:SF18">
    <property type="entry name" value="IP11787P-RELATED"/>
    <property type="match status" value="1"/>
</dbReference>
<dbReference type="Pfam" id="PF01770">
    <property type="entry name" value="Folate_carrier"/>
    <property type="match status" value="1"/>
</dbReference>
<dbReference type="PIRSF" id="PIRSF028739">
    <property type="entry name" value="Folate_carrier"/>
    <property type="match status" value="1"/>
</dbReference>
<dbReference type="SUPFAM" id="SSF103473">
    <property type="entry name" value="MFS general substrate transporter"/>
    <property type="match status" value="1"/>
</dbReference>
<evidence type="ECO:0000255" key="1"/>
<evidence type="ECO:0000305" key="2"/>
<comment type="subcellular location">
    <subcellularLocation>
        <location evidence="2">Membrane</location>
        <topology evidence="2">Multi-pass membrane protein</topology>
    </subcellularLocation>
</comment>
<comment type="similarity">
    <text evidence="2">Belongs to the reduced folate carrier (RFC) transporter (TC 2.A.48) family.</text>
</comment>
<feature type="chain" id="PRO_0000178665" description="Folate-like transporter 3">
    <location>
        <begin position="1"/>
        <end position="424"/>
    </location>
</feature>
<feature type="transmembrane region" description="Helical" evidence="1">
    <location>
        <begin position="55"/>
        <end position="75"/>
    </location>
</feature>
<feature type="transmembrane region" description="Helical" evidence="1">
    <location>
        <begin position="78"/>
        <end position="98"/>
    </location>
</feature>
<feature type="transmembrane region" description="Helical" evidence="1">
    <location>
        <begin position="101"/>
        <end position="119"/>
    </location>
</feature>
<feature type="transmembrane region" description="Helical" evidence="1">
    <location>
        <begin position="136"/>
        <end position="156"/>
    </location>
</feature>
<feature type="transmembrane region" description="Helical" evidence="1">
    <location>
        <begin position="164"/>
        <end position="184"/>
    </location>
</feature>
<feature type="transmembrane region" description="Helical" evidence="1">
    <location>
        <begin position="313"/>
        <end position="333"/>
    </location>
</feature>
<feature type="transmembrane region" description="Helical" evidence="1">
    <location>
        <begin position="361"/>
        <end position="381"/>
    </location>
</feature>
<feature type="transmembrane region" description="Helical" evidence="1">
    <location>
        <begin position="392"/>
        <end position="412"/>
    </location>
</feature>
<feature type="glycosylation site" description="N-linked (GlcNAc...) asparagine" evidence="1">
    <location>
        <position position="35"/>
    </location>
</feature>
<feature type="glycosylation site" description="N-linked (GlcNAc...) asparagine" evidence="1">
    <location>
        <position position="254"/>
    </location>
</feature>
<gene>
    <name type="primary">folt-3</name>
    <name type="ORF">C50E3.16</name>
</gene>
<organism>
    <name type="scientific">Caenorhabditis elegans</name>
    <dbReference type="NCBI Taxonomy" id="6239"/>
    <lineage>
        <taxon>Eukaryota</taxon>
        <taxon>Metazoa</taxon>
        <taxon>Ecdysozoa</taxon>
        <taxon>Nematoda</taxon>
        <taxon>Chromadorea</taxon>
        <taxon>Rhabditida</taxon>
        <taxon>Rhabditina</taxon>
        <taxon>Rhabditomorpha</taxon>
        <taxon>Rhabditoidea</taxon>
        <taxon>Rhabditidae</taxon>
        <taxon>Peloderinae</taxon>
        <taxon>Caenorhabditis</taxon>
    </lineage>
</organism>
<proteinExistence type="inferred from homology"/>
<reference key="1">
    <citation type="journal article" date="1998" name="Science">
        <title>Genome sequence of the nematode C. elegans: a platform for investigating biology.</title>
        <authorList>
            <consortium name="The C. elegans sequencing consortium"/>
        </authorList>
    </citation>
    <scope>NUCLEOTIDE SEQUENCE [LARGE SCALE GENOMIC DNA]</scope>
    <source>
        <strain>Bristol N2</strain>
    </source>
</reference>